<accession>Q5BD38</accession>
<accession>C8VMX9</accession>
<sequence length="810" mass="87098">MRAKNGPGSWLALTAIATSLNTLALAAAKTINHSYEFNPVVVSGGGYITGIIAHPTEKNLLYARTDIGGTYRWNADEDKWIPLNDFISGADENLLGTESVALDPNDPDRLYLAQGRYLNSENSAFFVSQDRGATFDVYPAPFKMGANELGRNNGERLAVNPFKTDELWMGTRDAGLMVSEDGAQTWRNVSGFPQANANGIGIYWVIFDPRSEGTVYVGVGVPGGIYVTRDSGESWEAVPGQPVEWDEDILVFPAESQPQSTGPQPMKGVLAENGALYVTYADAPGPYGVTYGGVYVYNTTSSAWTNITPKTNNSFPAPFDNQTFPAGGFCGISVDSKNPERLVVVSLDRDPGPALDSMYLSHDGGKSWKDVSQLSTPSGSGGYWGHPIEEAAFKDGTAVPWLSFNWGPQWGGYGAPSPVRGLTKFGWWMTAVVIDPSDSDHVLYGTGATIWATDNLSKVDKNQSPGWYIQAQGIEESVALALASPNGGDSHLLTGLGDINGYRYGDLDVPQPMFDLPVLSNLNALDWAGQKPEIIIRAGPCGHNYTDGCGLAAYSADGGSSWTKFATCIPGINTSSSNPGVIAIDASGKDIVWSSAMTAYWPTLQAITPRTNQSGPYVTTDLGQTWVSPTGLNVQTPNISADRVQPRTFYSFTDGTWYLSRDGGLSYRAYKAKEVGLPAYSGALPIANFNRAGEIWLGLGDHGIYHTRNFGKKWTKITGRGVTARQLTIGAGARRSSEPTLFIVGKAASHGALSKDGVYRSDDNGKTWVRVNDEKHQYGGIAMIQGDPRVYGRVYLGTGGRGIIYADIKE</sequence>
<evidence type="ECO:0000250" key="1"/>
<evidence type="ECO:0000255" key="2"/>
<evidence type="ECO:0000269" key="3">
    <source>
    </source>
</evidence>
<evidence type="ECO:0000269" key="4">
    <source>
    </source>
</evidence>
<evidence type="ECO:0000305" key="5"/>
<evidence type="ECO:0000305" key="6">
    <source>
    </source>
</evidence>
<evidence type="ECO:0000305" key="7">
    <source>
    </source>
</evidence>
<protein>
    <recommendedName>
        <fullName>Oligoxyloglucan-reducing end-specific xyloglucanase</fullName>
        <shortName>OREX</shortName>
        <ecNumber>3.2.1.150</ecNumber>
    </recommendedName>
</protein>
<dbReference type="EC" id="3.2.1.150"/>
<dbReference type="EMBL" id="AACD01000025">
    <property type="protein sequence ID" value="EAA64249.1"/>
    <property type="molecule type" value="Genomic_DNA"/>
</dbReference>
<dbReference type="EMBL" id="BN001307">
    <property type="protein sequence ID" value="CBF85075.1"/>
    <property type="molecule type" value="Genomic_DNA"/>
</dbReference>
<dbReference type="RefSeq" id="XP_659146.1">
    <property type="nucleotide sequence ID" value="XM_654054.1"/>
</dbReference>
<dbReference type="SMR" id="Q5BD38"/>
<dbReference type="STRING" id="227321.Q5BD38"/>
<dbReference type="CAZy" id="GH74">
    <property type="family name" value="Glycoside Hydrolase Family 74"/>
</dbReference>
<dbReference type="GlyCosmos" id="Q5BD38">
    <property type="glycosylation" value="10 sites, No reported glycans"/>
</dbReference>
<dbReference type="EnsemblFungi" id="CBF85075">
    <property type="protein sequence ID" value="CBF85075"/>
    <property type="gene ID" value="ANIA_01542"/>
</dbReference>
<dbReference type="KEGG" id="ani:ANIA_01542"/>
<dbReference type="VEuPathDB" id="FungiDB:AN1542"/>
<dbReference type="eggNOG" id="ENOG502SJCI">
    <property type="taxonomic scope" value="Eukaryota"/>
</dbReference>
<dbReference type="HOGENOM" id="CLU_004180_1_0_1"/>
<dbReference type="InParanoid" id="Q5BD38"/>
<dbReference type="OMA" id="MGDQGGF"/>
<dbReference type="OrthoDB" id="2151161at2759"/>
<dbReference type="Proteomes" id="UP000000560">
    <property type="component" value="Chromosome VII"/>
</dbReference>
<dbReference type="GO" id="GO:0005576">
    <property type="term" value="C:extracellular region"/>
    <property type="evidence" value="ECO:0007669"/>
    <property type="project" value="UniProtKB-SubCell"/>
</dbReference>
<dbReference type="GO" id="GO:0033945">
    <property type="term" value="F:oligoxyloglucan reducing-end-specific cellobiohydrolase activity"/>
    <property type="evidence" value="ECO:0000314"/>
    <property type="project" value="UniProtKB"/>
</dbReference>
<dbReference type="GO" id="GO:0071555">
    <property type="term" value="P:cell wall organization"/>
    <property type="evidence" value="ECO:0007669"/>
    <property type="project" value="UniProtKB-KW"/>
</dbReference>
<dbReference type="GO" id="GO:0000272">
    <property type="term" value="P:polysaccharide catabolic process"/>
    <property type="evidence" value="ECO:0007669"/>
    <property type="project" value="UniProtKB-KW"/>
</dbReference>
<dbReference type="GO" id="GO:0010411">
    <property type="term" value="P:xyloglucan metabolic process"/>
    <property type="evidence" value="ECO:0000314"/>
    <property type="project" value="UniProtKB"/>
</dbReference>
<dbReference type="Gene3D" id="2.130.10.10">
    <property type="entry name" value="YVTN repeat-like/Quinoprotein amine dehydrogenase"/>
    <property type="match status" value="2"/>
</dbReference>
<dbReference type="InterPro" id="IPR015943">
    <property type="entry name" value="WD40/YVTN_repeat-like_dom_sf"/>
</dbReference>
<dbReference type="InterPro" id="IPR052025">
    <property type="entry name" value="Xyloglucanase_GH74"/>
</dbReference>
<dbReference type="PANTHER" id="PTHR43739:SF2">
    <property type="entry name" value="OLIGOXYLOGLUCAN-REDUCING END-SPECIFIC XYLOGLUCANASE-RELATED"/>
    <property type="match status" value="1"/>
</dbReference>
<dbReference type="PANTHER" id="PTHR43739">
    <property type="entry name" value="XYLOGLUCANASE (EUROFUNG)"/>
    <property type="match status" value="1"/>
</dbReference>
<dbReference type="SUPFAM" id="SSF110296">
    <property type="entry name" value="Oligoxyloglucan reducing end-specific cellobiohydrolase"/>
    <property type="match status" value="2"/>
</dbReference>
<name>XGCA_EMENI</name>
<proteinExistence type="evidence at protein level"/>
<gene>
    <name type="primary">xgcA</name>
    <name type="ORF">AN1542</name>
</gene>
<reference key="1">
    <citation type="journal article" date="2005" name="Nature">
        <title>Sequencing of Aspergillus nidulans and comparative analysis with A. fumigatus and A. oryzae.</title>
        <authorList>
            <person name="Galagan J.E."/>
            <person name="Calvo S.E."/>
            <person name="Cuomo C."/>
            <person name="Ma L.-J."/>
            <person name="Wortman J.R."/>
            <person name="Batzoglou S."/>
            <person name="Lee S.-I."/>
            <person name="Bastuerkmen M."/>
            <person name="Spevak C.C."/>
            <person name="Clutterbuck J."/>
            <person name="Kapitonov V."/>
            <person name="Jurka J."/>
            <person name="Scazzocchio C."/>
            <person name="Farman M.L."/>
            <person name="Butler J."/>
            <person name="Purcell S."/>
            <person name="Harris S."/>
            <person name="Braus G.H."/>
            <person name="Draht O."/>
            <person name="Busch S."/>
            <person name="D'Enfert C."/>
            <person name="Bouchier C."/>
            <person name="Goldman G.H."/>
            <person name="Bell-Pedersen D."/>
            <person name="Griffiths-Jones S."/>
            <person name="Doonan J.H."/>
            <person name="Yu J."/>
            <person name="Vienken K."/>
            <person name="Pain A."/>
            <person name="Freitag M."/>
            <person name="Selker E.U."/>
            <person name="Archer D.B."/>
            <person name="Penalva M.A."/>
            <person name="Oakley B.R."/>
            <person name="Momany M."/>
            <person name="Tanaka T."/>
            <person name="Kumagai T."/>
            <person name="Asai K."/>
            <person name="Machida M."/>
            <person name="Nierman W.C."/>
            <person name="Denning D.W."/>
            <person name="Caddick M.X."/>
            <person name="Hynes M."/>
            <person name="Paoletti M."/>
            <person name="Fischer R."/>
            <person name="Miller B.L."/>
            <person name="Dyer P.S."/>
            <person name="Sachs M.S."/>
            <person name="Osmani S.A."/>
            <person name="Birren B.W."/>
        </authorList>
    </citation>
    <scope>NUCLEOTIDE SEQUENCE [LARGE SCALE GENOMIC DNA]</scope>
    <source>
        <strain>FGSC A4 / ATCC 38163 / CBS 112.46 / NRRL 194 / M139</strain>
    </source>
</reference>
<reference key="2">
    <citation type="journal article" date="2009" name="Fungal Genet. Biol.">
        <title>The 2008 update of the Aspergillus nidulans genome annotation: a community effort.</title>
        <authorList>
            <person name="Wortman J.R."/>
            <person name="Gilsenan J.M."/>
            <person name="Joardar V."/>
            <person name="Deegan J."/>
            <person name="Clutterbuck J."/>
            <person name="Andersen M.R."/>
            <person name="Archer D."/>
            <person name="Bencina M."/>
            <person name="Braus G."/>
            <person name="Coutinho P."/>
            <person name="von Dohren H."/>
            <person name="Doonan J."/>
            <person name="Driessen A.J."/>
            <person name="Durek P."/>
            <person name="Espeso E."/>
            <person name="Fekete E."/>
            <person name="Flipphi M."/>
            <person name="Estrada C.G."/>
            <person name="Geysens S."/>
            <person name="Goldman G."/>
            <person name="de Groot P.W."/>
            <person name="Hansen K."/>
            <person name="Harris S.D."/>
            <person name="Heinekamp T."/>
            <person name="Helmstaedt K."/>
            <person name="Henrissat B."/>
            <person name="Hofmann G."/>
            <person name="Homan T."/>
            <person name="Horio T."/>
            <person name="Horiuchi H."/>
            <person name="James S."/>
            <person name="Jones M."/>
            <person name="Karaffa L."/>
            <person name="Karanyi Z."/>
            <person name="Kato M."/>
            <person name="Keller N."/>
            <person name="Kelly D.E."/>
            <person name="Kiel J.A."/>
            <person name="Kim J.M."/>
            <person name="van der Klei I.J."/>
            <person name="Klis F.M."/>
            <person name="Kovalchuk A."/>
            <person name="Krasevec N."/>
            <person name="Kubicek C.P."/>
            <person name="Liu B."/>
            <person name="Maccabe A."/>
            <person name="Meyer V."/>
            <person name="Mirabito P."/>
            <person name="Miskei M."/>
            <person name="Mos M."/>
            <person name="Mullins J."/>
            <person name="Nelson D.R."/>
            <person name="Nielsen J."/>
            <person name="Oakley B.R."/>
            <person name="Osmani S.A."/>
            <person name="Pakula T."/>
            <person name="Paszewski A."/>
            <person name="Paulsen I."/>
            <person name="Pilsyk S."/>
            <person name="Pocsi I."/>
            <person name="Punt P.J."/>
            <person name="Ram A.F."/>
            <person name="Ren Q."/>
            <person name="Robellet X."/>
            <person name="Robson G."/>
            <person name="Seiboth B."/>
            <person name="van Solingen P."/>
            <person name="Specht T."/>
            <person name="Sun J."/>
            <person name="Taheri-Talesh N."/>
            <person name="Takeshita N."/>
            <person name="Ussery D."/>
            <person name="vanKuyk P.A."/>
            <person name="Visser H."/>
            <person name="van de Vondervoort P.J."/>
            <person name="de Vries R.P."/>
            <person name="Walton J."/>
            <person name="Xiang X."/>
            <person name="Xiong Y."/>
            <person name="Zeng A.P."/>
            <person name="Brandt B.W."/>
            <person name="Cornell M.J."/>
            <person name="van den Hondel C.A."/>
            <person name="Visser J."/>
            <person name="Oliver S.G."/>
            <person name="Turner G."/>
        </authorList>
    </citation>
    <scope>GENOME REANNOTATION</scope>
    <source>
        <strain>FGSC A4 / ATCC 38163 / CBS 112.46 / NRRL 194 / M139</strain>
    </source>
</reference>
<reference key="3">
    <citation type="journal article" date="2005" name="Carbohydr. Res.">
        <title>Cloning, expression, and characterization of an oligoxyloglucan reducing end-specific xyloglucanobiohydrolase from Aspergillus nidulans.</title>
        <authorList>
            <person name="Bauer S."/>
            <person name="Vasu P."/>
            <person name="Mort A.J."/>
            <person name="Somerville C.R."/>
        </authorList>
    </citation>
    <scope>FUNCTION</scope>
    <scope>BIOPHYSICOCHEMICAL PROPERTIES</scope>
</reference>
<reference key="4">
    <citation type="journal article" date="2006" name="Proc. Natl. Acad. Sci. U.S.A.">
        <title>Development and application of a suite of polysaccharide-degrading enzymes for analyzing plant cell walls.</title>
        <authorList>
            <person name="Bauer S."/>
            <person name="Vasu P."/>
            <person name="Persson S."/>
            <person name="Mort A.J."/>
            <person name="Somerville C.R."/>
        </authorList>
    </citation>
    <scope>FUNCTION</scope>
    <scope>BIOPHYSICOCHEMICAL PROPERTIES</scope>
    <source>
        <strain>FGSC A4 / ATCC 38163 / CBS 112.46 / NRRL 194 / M139</strain>
    </source>
</reference>
<comment type="function">
    <text evidence="6 7">Oligoxyloglucan-reducing end-specific xyloglucanase involved in degradation of xyloglucans. Releases the first two glycosyl segments from oligoxyloglucans. Active against cotton xyloglucan, tamarind xyloglucan and tamarind xyloglucan oligomers (Probable).</text>
</comment>
<comment type="catalytic activity">
    <reaction>
        <text>Hydrolysis of cellobiose from the reducing end of xyloglucans consisting of a beta-(1-&gt;4)-linked glucan carrying alpha-D-xylosyl groups on O-6 of the glucose residues. To be a substrate, the first residue must be unsubstituted, the second residue may bear a xylosyl group, whether further glycosylated or not, and the third residue, which becomes the new terminus by the action of the enzyme, is preferably xylosylated, but this xylose residue must not be further substituted.</text>
        <dbReference type="EC" id="3.2.1.150"/>
    </reaction>
</comment>
<comment type="biophysicochemical properties">
    <phDependence>
        <text evidence="3 4">Optimum pH 3.0.</text>
    </phDependence>
    <temperatureDependence>
        <text evidence="3 4">Optimum temperature is 42 degrees Celsius.</text>
    </temperatureDependence>
</comment>
<comment type="subcellular location">
    <subcellularLocation>
        <location evidence="5">Secreted</location>
    </subcellularLocation>
</comment>
<comment type="similarity">
    <text evidence="5">Belongs to the glycosyl hydrolase 74 family.</text>
</comment>
<keyword id="KW-0119">Carbohydrate metabolism</keyword>
<keyword id="KW-0961">Cell wall biogenesis/degradation</keyword>
<keyword id="KW-0325">Glycoprotein</keyword>
<keyword id="KW-0326">Glycosidase</keyword>
<keyword id="KW-0378">Hydrolase</keyword>
<keyword id="KW-0624">Polysaccharide degradation</keyword>
<keyword id="KW-1185">Reference proteome</keyword>
<keyword id="KW-0677">Repeat</keyword>
<keyword id="KW-0964">Secreted</keyword>
<keyword id="KW-0732">Signal</keyword>
<organism>
    <name type="scientific">Emericella nidulans (strain FGSC A4 / ATCC 38163 / CBS 112.46 / NRRL 194 / M139)</name>
    <name type="common">Aspergillus nidulans</name>
    <dbReference type="NCBI Taxonomy" id="227321"/>
    <lineage>
        <taxon>Eukaryota</taxon>
        <taxon>Fungi</taxon>
        <taxon>Dikarya</taxon>
        <taxon>Ascomycota</taxon>
        <taxon>Pezizomycotina</taxon>
        <taxon>Eurotiomycetes</taxon>
        <taxon>Eurotiomycetidae</taxon>
        <taxon>Eurotiales</taxon>
        <taxon>Aspergillaceae</taxon>
        <taxon>Aspergillus</taxon>
        <taxon>Aspergillus subgen. Nidulantes</taxon>
    </lineage>
</organism>
<feature type="signal peptide" evidence="2">
    <location>
        <begin position="1"/>
        <end position="28"/>
    </location>
</feature>
<feature type="chain" id="PRO_0000394077" description="Oligoxyloglucan-reducing end-specific xyloglucanase">
    <location>
        <begin position="29"/>
        <end position="810"/>
    </location>
</feature>
<feature type="repeat" description="BNR 1">
    <location>
        <begin position="126"/>
        <end position="135"/>
    </location>
</feature>
<feature type="repeat" description="BNR 2">
    <location>
        <begin position="226"/>
        <end position="236"/>
    </location>
</feature>
<feature type="repeat" description="BNR 3">
    <location>
        <begin position="359"/>
        <end position="369"/>
    </location>
</feature>
<feature type="repeat" description="BNR 4">
    <location>
        <begin position="554"/>
        <end position="564"/>
    </location>
</feature>
<feature type="repeat" description="BNR 5">
    <location>
        <begin position="617"/>
        <end position="626"/>
    </location>
</feature>
<feature type="repeat" description="BNR 6">
    <location>
        <begin position="658"/>
        <end position="667"/>
    </location>
</feature>
<feature type="repeat" description="BNR 7">
    <location>
        <begin position="705"/>
        <end position="716"/>
    </location>
</feature>
<feature type="repeat" description="BNR 8">
    <location>
        <begin position="759"/>
        <end position="769"/>
    </location>
</feature>
<feature type="active site" description="Nucleophile" evidence="1">
    <location>
        <position position="66"/>
    </location>
</feature>
<feature type="active site" description="Proton donor" evidence="1">
    <location>
        <position position="498"/>
    </location>
</feature>
<feature type="glycosylation site" description="N-linked (GlcNAc...) asparagine" evidence="2">
    <location>
        <position position="32"/>
    </location>
</feature>
<feature type="glycosylation site" description="N-linked (GlcNAc...) asparagine" evidence="2">
    <location>
        <position position="188"/>
    </location>
</feature>
<feature type="glycosylation site" description="N-linked (GlcNAc...) asparagine" evidence="2">
    <location>
        <position position="298"/>
    </location>
</feature>
<feature type="glycosylation site" description="N-linked (GlcNAc...) asparagine" evidence="2">
    <location>
        <position position="312"/>
    </location>
</feature>
<feature type="glycosylation site" description="N-linked (GlcNAc...) asparagine" evidence="2">
    <location>
        <position position="321"/>
    </location>
</feature>
<feature type="glycosylation site" description="N-linked (GlcNAc...) asparagine" evidence="2">
    <location>
        <position position="455"/>
    </location>
</feature>
<feature type="glycosylation site" description="N-linked (GlcNAc...) asparagine" evidence="2">
    <location>
        <position position="544"/>
    </location>
</feature>
<feature type="glycosylation site" description="N-linked (GlcNAc...) asparagine" evidence="2">
    <location>
        <position position="573"/>
    </location>
</feature>
<feature type="glycosylation site" description="N-linked (GlcNAc...) asparagine" evidence="2">
    <location>
        <position position="612"/>
    </location>
</feature>
<feature type="glycosylation site" description="N-linked (GlcNAc...) asparagine" evidence="2">
    <location>
        <position position="638"/>
    </location>
</feature>